<sequence length="398" mass="43190">MNKKKLGIRLLSLLALGGFVLANPVFADQNFARNEKEAKDSAITFIQKSAAIKAGARSAEDIKLDKVNLGGELSGSNMYVYNISTGGFVIVSGDKRSPEILGYSTSGSFDANGKENIASFMESYVEQIKENKKLDTTYAGTAEIKQPVVKSLLDSKGIHYNQGNPYNLLTPVIEKVKPGEQSFVGQHAATGCVATATAQIMKYHNYPNKGLKDYTYTLSSNNPYFNHPKNLFAAISTRQYNWNNILPTYSGRESNVQKMAISELMADVGISVDMDYGPSSGSAGSSRVQRALKENFGYNQSVHQINRSDFSKQDWESQIDKELSQNQPVYYQGVGKVGGHAFVIDGADGRNFYHVNWGWGGVSDGFFRLDALNPSALGTGGGAGGFNGYQSAVVGIKP</sequence>
<dbReference type="EC" id="3.4.22.10"/>
<dbReference type="EMBL" id="L26134">
    <property type="protein sequence ID" value="AAA27000.1"/>
    <property type="molecule type" value="Genomic_DNA"/>
</dbReference>
<dbReference type="EMBL" id="CP000056">
    <property type="protein sequence ID" value="AAX72831.1"/>
    <property type="molecule type" value="Genomic_DNA"/>
</dbReference>
<dbReference type="RefSeq" id="WP_011285235.1">
    <property type="nucleotide sequence ID" value="NC_007296.2"/>
</dbReference>
<dbReference type="SMR" id="Q48R29"/>
<dbReference type="MEROPS" id="C10.001"/>
<dbReference type="KEGG" id="spb:M28_Spy1721"/>
<dbReference type="HOGENOM" id="CLU_716727_0_0_9"/>
<dbReference type="GO" id="GO:0005576">
    <property type="term" value="C:extracellular region"/>
    <property type="evidence" value="ECO:0007669"/>
    <property type="project" value="UniProtKB-SubCell"/>
</dbReference>
<dbReference type="GO" id="GO:0044164">
    <property type="term" value="C:host cell cytosol"/>
    <property type="evidence" value="ECO:0000250"/>
    <property type="project" value="UniProtKB"/>
</dbReference>
<dbReference type="GO" id="GO:0043655">
    <property type="term" value="C:host extracellular space"/>
    <property type="evidence" value="ECO:0000250"/>
    <property type="project" value="UniProtKB"/>
</dbReference>
<dbReference type="GO" id="GO:0004197">
    <property type="term" value="F:cysteine-type endopeptidase activity"/>
    <property type="evidence" value="ECO:0000250"/>
    <property type="project" value="UniProtKB"/>
</dbReference>
<dbReference type="GO" id="GO:0090729">
    <property type="term" value="F:toxin activity"/>
    <property type="evidence" value="ECO:0007669"/>
    <property type="project" value="UniProtKB-KW"/>
</dbReference>
<dbReference type="GO" id="GO:0006508">
    <property type="term" value="P:proteolysis"/>
    <property type="evidence" value="ECO:0007669"/>
    <property type="project" value="UniProtKB-KW"/>
</dbReference>
<dbReference type="GO" id="GO:0034050">
    <property type="term" value="P:symbiont-induced defense-related programmed cell death"/>
    <property type="evidence" value="ECO:0000250"/>
    <property type="project" value="UniProtKB"/>
</dbReference>
<dbReference type="GO" id="GO:0042783">
    <property type="term" value="P:symbiont-mediated evasion of host immune response"/>
    <property type="evidence" value="ECO:0000250"/>
    <property type="project" value="UniProtKB"/>
</dbReference>
<dbReference type="GO" id="GO:0140321">
    <property type="term" value="P:symbiont-mediated suppression of host autophagy"/>
    <property type="evidence" value="ECO:0000250"/>
    <property type="project" value="UniProtKB"/>
</dbReference>
<dbReference type="Gene3D" id="3.90.70.50">
    <property type="entry name" value="Peptidase C10, streptopain"/>
    <property type="match status" value="1"/>
</dbReference>
<dbReference type="InterPro" id="IPR038765">
    <property type="entry name" value="Papain-like_cys_pep_sf"/>
</dbReference>
<dbReference type="InterPro" id="IPR000200">
    <property type="entry name" value="Peptidase_C10"/>
</dbReference>
<dbReference type="InterPro" id="IPR025896">
    <property type="entry name" value="Spi_Prtas-inh"/>
</dbReference>
<dbReference type="InterPro" id="IPR044934">
    <property type="entry name" value="Streptopain_sf"/>
</dbReference>
<dbReference type="Pfam" id="PF13734">
    <property type="entry name" value="Inhibitor_I69"/>
    <property type="match status" value="1"/>
</dbReference>
<dbReference type="Pfam" id="PF01640">
    <property type="entry name" value="Peptidase_C10"/>
    <property type="match status" value="1"/>
</dbReference>
<dbReference type="PRINTS" id="PR00797">
    <property type="entry name" value="STREPTOPAIN"/>
</dbReference>
<dbReference type="SUPFAM" id="SSF54001">
    <property type="entry name" value="Cysteine proteinases"/>
    <property type="match status" value="1"/>
</dbReference>
<feature type="signal peptide" evidence="1">
    <location>
        <begin position="1"/>
        <end position="27"/>
    </location>
</feature>
<feature type="propeptide" id="PRO_0000042664" evidence="1">
    <location>
        <begin position="28"/>
        <end position="145"/>
    </location>
</feature>
<feature type="chain" id="PRO_0000042665" description="Streptopain">
    <location>
        <begin position="146"/>
        <end position="398"/>
    </location>
</feature>
<feature type="region of interest" description="C-terminal active site loop" evidence="1">
    <location>
        <begin position="368"/>
        <end position="390"/>
    </location>
</feature>
<feature type="active site" description="Nucleophile" evidence="1">
    <location>
        <position position="192"/>
    </location>
</feature>
<feature type="active site" description="Proton acceptor" evidence="1">
    <location>
        <position position="340"/>
    </location>
</feature>
<feature type="binding site" evidence="1">
    <location>
        <position position="282"/>
    </location>
    <ligand>
        <name>a protein</name>
        <dbReference type="ChEBI" id="CHEBI:16541"/>
    </ligand>
</feature>
<feature type="binding site" evidence="1">
    <location>
        <position position="339"/>
    </location>
    <ligand>
        <name>a protein</name>
        <dbReference type="ChEBI" id="CHEBI:16541"/>
    </ligand>
</feature>
<feature type="modified residue" description="Cysteine methyl disulfide; in zymogen form" evidence="1">
    <location>
        <position position="192"/>
    </location>
</feature>
<feature type="sequence conflict" description="In Ref. 1; AAA27000." evidence="4" ref="1">
    <original>K</original>
    <variation>R</variation>
    <location>
        <position position="293"/>
    </location>
</feature>
<reference key="1">
    <citation type="journal article" date="1993" name="Microb. Pathog.">
        <title>A conserved Streptococcus pyogenes extracellular cysteine protease cleaves human fibronectin and degrades vitronectin.</title>
        <authorList>
            <person name="Kapur V."/>
            <person name="Topouzis S."/>
            <person name="Majesky M.W."/>
            <person name="Li L.L."/>
            <person name="Hamrick M.R."/>
            <person name="Hamill R.J."/>
            <person name="Patti J.M."/>
            <person name="Musser J.M."/>
        </authorList>
    </citation>
    <scope>NUCLEOTIDE SEQUENCE [GENOMIC DNA]</scope>
    <scope>FUNCTION</scope>
    <scope>SUBCELLULAR LOCATION</scope>
    <source>
        <strain>MGAS587 / Serotype M28</strain>
    </source>
</reference>
<reference key="2">
    <citation type="journal article" date="2005" name="J. Infect. Dis.">
        <title>Genome sequence of a serotype M28 strain of group A Streptococcus: potential new insights into puerperal sepsis and bacterial disease specificity.</title>
        <authorList>
            <person name="Green N.M."/>
            <person name="Zhang S."/>
            <person name="Porcella S.F."/>
            <person name="Nagiec M.J."/>
            <person name="Barbian K.D."/>
            <person name="Beres S.B."/>
            <person name="Lefebvre R.B."/>
            <person name="Musser J.M."/>
        </authorList>
    </citation>
    <scope>NUCLEOTIDE SEQUENCE [LARGE SCALE GENOMIC DNA]</scope>
    <source>
        <strain>MGAS6180</strain>
    </source>
</reference>
<evidence type="ECO:0000250" key="1">
    <source>
        <dbReference type="UniProtKB" id="P0C0J0"/>
    </source>
</evidence>
<evidence type="ECO:0000250" key="2">
    <source>
        <dbReference type="UniProtKB" id="P0C0J1"/>
    </source>
</evidence>
<evidence type="ECO:0000269" key="3">
    <source>
    </source>
</evidence>
<evidence type="ECO:0000305" key="4"/>
<proteinExistence type="inferred from homology"/>
<comment type="function">
    <text evidence="2 3">Cysteine protease that acts as a key streptococcal virulence factor by cleaving host proteins involved in immune response (PubMed:7516997). Triggers inflammation by mediating cleavage of host proteins, which can both promote host pathogenesis by triggering sterile inflammation and/or restrict streptococcal infection, depending on host immune statue and infection site (By similarity). Cleaves host gasdermin-A (GSDMA) in epithelial cells, promoting GSDMA activation and formation of gasdermin pores, triggering pyroptosis (By similarity). Pyroptosis triggers the elimination of the infected skin cell, depriving the pathogen of its protective niche, while inducing an inflammatory response (By similarity). This ultimately prevents bacterial penetration of the epithelial barrier and a subsequent systemic dissemination of the pathogen (By similarity). Also mediates cleavage of the cytokine precursor interleukin-1 beta (IL1B) to its mature form, resulting in inflammation and septic shock (By similarity). SpeB-mediated maturation of IL1B plays a dual role depending on infection site: while IL1B inflammatory response prevents bacterial growth during invasive skin infections, it promotes streptococcal infection of the nasopharynx by disrupting colonization resistance mediated by the microbiota (By similarity). Inhibits host autophagy be catalyzing cleavage and inactivation of key autophagy factors, such as CALCOCO2, NBR1 and SQSTM1 (By similarity). Cleaves and inhibits a number of complement factors, such as C2, C3-beta chain of C3, C4, C5 or SERPING1, thereby promoting evasion of host immunity (By similarity). May also impair adaptive immunity by catalyzing cleavage and degradation of host immunoglobulins to promote immune system evasion; the relevance of this activity is however unsure in vivo (By similarity). Catalyzes maturation and release of the peptide hormone bradykinin from the precursor Kininogen-1 (KNG1) to produce hypotension during septic shock (By similarity). Also involved in bacterial translocation across the host epithelial barrier by mediating cleavage and degradation of host epithelial junction proteins, such as CDH1 and OCLN (By similarity). Additionally, has been involved in degradation of fibronectin and vitronectin, two host extracellular matrix proteins involved in tissue integrity (PubMed:7516997). Also able to catalyze cleavage and degradation of streptococcal proteins, such as C5a peptidase, EndoS or SmeZ (By similarity). Degradation of streptococcal proteins is however strictly regulated to preserve integrity of other virulence factors (By similarity).</text>
</comment>
<comment type="catalytic activity">
    <reaction evidence="2">
        <text>Preferential cleavage with hydrophobic residues at P2, P1 and P1'.</text>
        <dbReference type="EC" id="3.4.22.10"/>
    </reaction>
</comment>
<comment type="activity regulation">
    <text evidence="1 2">Synthesized as an inactive zymogen to protect the intracellular components of the bacteria from proteolytic activity during protein production (By similarity). Once secreted into the extracellular milieu, cleaved into the active protease: maturation can be mediated in cis by autocatalytic cleavage, or in trans by mature SpeB or host proteases. Protease activity is strongly inhibited by zinc and copper, which prevent its maturation into an active protease: inhibition by metal ions may be required to prevent proteolysis of streptococcal proteins (By similarity).</text>
</comment>
<comment type="subunit">
    <text evidence="1">Monomer.</text>
</comment>
<comment type="subcellular location">
    <subcellularLocation>
        <location evidence="3">Secreted</location>
    </subcellularLocation>
    <subcellularLocation>
        <location evidence="3">Host extracellular space</location>
    </subcellularLocation>
    <subcellularLocation>
        <location evidence="1">Host cytoplasm</location>
    </subcellularLocation>
</comment>
<comment type="domain">
    <text evidence="1">The C-terminal active site loop is required for the recognition and recruitment of substrates and release of hydrolyzed products.</text>
</comment>
<comment type="PTM">
    <text evidence="2">The mature protease is derived from the precursor sequence by cleavage, either in cis via an autocatalytic mechanism, or in trans by mature SpeB or host proteases (trypsin, plasmin or subtilisin). Maturation can involve a number of protein cleavage intermediates. Mature SpeB probably plays the most important role in protein maturation in physiological conditions.</text>
</comment>
<comment type="PTM">
    <text evidence="1">Methylthiolation at Cys-192 of the inactive zymogen form is probably involved in the mechanism of secretion of the proteinase into the culture fluid.</text>
</comment>
<comment type="similarity">
    <text evidence="4">Belongs to the peptidase C10 family.</text>
</comment>
<protein>
    <recommendedName>
        <fullName>Streptopain</fullName>
        <ecNumber>3.4.22.10</ecNumber>
    </recommendedName>
    <alternativeName>
        <fullName>Exotoxin type B</fullName>
    </alternativeName>
    <alternativeName>
        <fullName>SPE B</fullName>
    </alternativeName>
    <alternativeName>
        <fullName>Streptococcal cysteine proteinase</fullName>
    </alternativeName>
    <alternativeName>
        <fullName>Streptococcus peptidase A</fullName>
        <shortName>SPP</shortName>
    </alternativeName>
</protein>
<organism>
    <name type="scientific">Streptococcus pyogenes serotype M28 (strain MGAS6180)</name>
    <dbReference type="NCBI Taxonomy" id="319701"/>
    <lineage>
        <taxon>Bacteria</taxon>
        <taxon>Bacillati</taxon>
        <taxon>Bacillota</taxon>
        <taxon>Bacilli</taxon>
        <taxon>Lactobacillales</taxon>
        <taxon>Streptococcaceae</taxon>
        <taxon>Streptococcus</taxon>
    </lineage>
</organism>
<keyword id="KW-0068">Autocatalytic cleavage</keyword>
<keyword id="KW-1035">Host cytoplasm</keyword>
<keyword id="KW-0378">Hydrolase</keyword>
<keyword id="KW-0488">Methylation</keyword>
<keyword id="KW-0645">Protease</keyword>
<keyword id="KW-0964">Secreted</keyword>
<keyword id="KW-0732">Signal</keyword>
<keyword id="KW-0788">Thiol protease</keyword>
<keyword id="KW-0800">Toxin</keyword>
<keyword id="KW-0843">Virulence</keyword>
<keyword id="KW-0865">Zymogen</keyword>
<name>SPEB_STRPM</name>
<accession>Q48R29</accession>
<gene>
    <name type="primary">speB</name>
    <name type="ordered locus">M28_Spy1721</name>
</gene>